<organism>
    <name type="scientific">Mus musculus</name>
    <name type="common">Mouse</name>
    <dbReference type="NCBI Taxonomy" id="10090"/>
    <lineage>
        <taxon>Eukaryota</taxon>
        <taxon>Metazoa</taxon>
        <taxon>Chordata</taxon>
        <taxon>Craniata</taxon>
        <taxon>Vertebrata</taxon>
        <taxon>Euteleostomi</taxon>
        <taxon>Mammalia</taxon>
        <taxon>Eutheria</taxon>
        <taxon>Euarchontoglires</taxon>
        <taxon>Glires</taxon>
        <taxon>Rodentia</taxon>
        <taxon>Myomorpha</taxon>
        <taxon>Muroidea</taxon>
        <taxon>Muridae</taxon>
        <taxon>Murinae</taxon>
        <taxon>Mus</taxon>
        <taxon>Mus</taxon>
    </lineage>
</organism>
<sequence>MKEKSKNAARTRREKENSEFYELAKLLPLPSAITSQLDKASIIRLTTSYLKMRVVFPEGLGEAWGHTSRTSPLDNVGRELGSHLLQTLDGFIFVVAPDGKIMYISETASVHLGLSQVELTGNSIYEYIHPADHDEMTAVLTAHQPYHSHFVQEYEIERSFFLRMKCVLAKRNAGLTCGGYKVIHCSGYLKIRQYSLDMSPFDGCYQNVGLVAVGHSLPPSAVTEIKLHSNMFMFRASLDMKLIFLDSRVAELTGYEPQDLIEKTLYHHVHGCDTFHLRCAHHLLLVKGQVTTKYYRFLAKQGGWVWVQSYATIVHNSRSSRPHCIVSVNYVLTDTEYKGLQLSLDQISASKPTFSYTSSSTPTISDNRKGAKSRLSSSKSKSRTSPYPQYSGFHTERSESDHDSQWGGSPLTDTASPQLLDPERPGSQHELSCAYRQFPDRSSLCYGFALDHSRLVEDRHFHTQACEGGRCEAGRYFLGAPPTGRDPWWGSRAALPLTKASPESREAYENSMPHITSIHRIHGRGHWDEDSVVSSPDPGSASESGDRYRTEQYQNSPHEPSKIETLIRATQQMIKEEENRLQLRKAPPDQLASINGAGKKHSLCFANYQQPPPTGEVCHSSALASTSPCDHIQQREGKMLSPHENDYDNSPTALSRISSPSSDRITKSSLILAKDYLHSDMSPHQTAGDHPAISPNCFGSHRQYFDKHAYTLTGYALEHLYDSETIRNYSLGCNGSHFDVTSHLRMQPDPAQGHKGTSVIITNGS</sequence>
<gene>
    <name type="primary">Sim1</name>
</gene>
<comment type="function">
    <text>Transcriptional factor that may have pleiotropic effects during embryogenesis and in the adult.</text>
</comment>
<comment type="subunit">
    <text evidence="6 7">Efficient DNA binding requires dimerization with another bHLH protein. Heterodimer; forms a heterodimer with ARNT, ARNT2.</text>
</comment>
<comment type="interaction">
    <interactant intactId="EBI-78890">
        <id>Q61045</id>
    </interactant>
    <interactant intactId="EBI-78852">
        <id>P53762</id>
        <label>Arnt</label>
    </interactant>
    <organismsDiffer>false</organismsDiffer>
    <experiments>4</experiments>
</comment>
<comment type="subcellular location">
    <subcellularLocation>
        <location evidence="3 4">Nucleus</location>
    </subcellularLocation>
</comment>
<comment type="tissue specificity">
    <text>Detected in lung, skeletal muscle and kidney. During fetal development it is found in the CNS, developing kidney, mesodermal and endodermal tissues, including developing somites, mesonephric duct, and foregut.</text>
</comment>
<comment type="sequence caution" evidence="8">
    <conflict type="erroneous termination">
        <sequence resource="EMBL-CDS" id="AAA91201"/>
    </conflict>
    <text>Truncated C-terminus.</text>
</comment>
<protein>
    <recommendedName>
        <fullName>Single-minded homolog 1</fullName>
        <shortName>mSIM1</shortName>
    </recommendedName>
</protein>
<proteinExistence type="evidence at protein level"/>
<keyword id="KW-0217">Developmental protein</keyword>
<keyword id="KW-0221">Differentiation</keyword>
<keyword id="KW-0238">DNA-binding</keyword>
<keyword id="KW-0524">Neurogenesis</keyword>
<keyword id="KW-0539">Nucleus</keyword>
<keyword id="KW-1185">Reference proteome</keyword>
<keyword id="KW-0677">Repeat</keyword>
<keyword id="KW-0804">Transcription</keyword>
<keyword id="KW-0805">Transcription regulation</keyword>
<dbReference type="EMBL" id="U40575">
    <property type="protein sequence ID" value="AAA91201.1"/>
    <property type="status" value="ALT_SEQ"/>
    <property type="molecule type" value="mRNA"/>
</dbReference>
<dbReference type="EMBL" id="AF038857">
    <property type="protein sequence ID" value="AAC05481.1"/>
    <property type="molecule type" value="Genomic_DNA"/>
</dbReference>
<dbReference type="EMBL" id="AF038853">
    <property type="protein sequence ID" value="AAC05481.1"/>
    <property type="status" value="JOINED"/>
    <property type="molecule type" value="Genomic_DNA"/>
</dbReference>
<dbReference type="EMBL" id="AF038854">
    <property type="protein sequence ID" value="AAC05481.1"/>
    <property type="status" value="JOINED"/>
    <property type="molecule type" value="Genomic_DNA"/>
</dbReference>
<dbReference type="EMBL" id="AF038856">
    <property type="protein sequence ID" value="AAC05481.1"/>
    <property type="status" value="JOINED"/>
    <property type="molecule type" value="Genomic_DNA"/>
</dbReference>
<dbReference type="EMBL" id="AF044913">
    <property type="protein sequence ID" value="AAC05481.1"/>
    <property type="status" value="JOINED"/>
    <property type="molecule type" value="Genomic_DNA"/>
</dbReference>
<dbReference type="EMBL" id="AF038855">
    <property type="protein sequence ID" value="AAC05481.1"/>
    <property type="status" value="JOINED"/>
    <property type="molecule type" value="Genomic_DNA"/>
</dbReference>
<dbReference type="EMBL" id="D79209">
    <property type="protein sequence ID" value="BAA11467.1"/>
    <property type="molecule type" value="mRNA"/>
</dbReference>
<dbReference type="EMBL" id="AB013491">
    <property type="protein sequence ID" value="BAA28270.1"/>
    <property type="molecule type" value="Genomic_DNA"/>
</dbReference>
<dbReference type="CCDS" id="CCDS48556.1"/>
<dbReference type="RefSeq" id="NP_035506.2">
    <property type="nucleotide sequence ID" value="NM_011376.3"/>
</dbReference>
<dbReference type="RefSeq" id="XP_006512690.1">
    <property type="nucleotide sequence ID" value="XM_006512627.4"/>
</dbReference>
<dbReference type="SMR" id="Q61045"/>
<dbReference type="BioGRID" id="203254">
    <property type="interactions" value="2"/>
</dbReference>
<dbReference type="CORUM" id="Q61045"/>
<dbReference type="FunCoup" id="Q61045">
    <property type="interactions" value="1419"/>
</dbReference>
<dbReference type="IntAct" id="Q61045">
    <property type="interactions" value="3"/>
</dbReference>
<dbReference type="MINT" id="Q61045"/>
<dbReference type="STRING" id="10090.ENSMUSP00000020071"/>
<dbReference type="iPTMnet" id="Q61045"/>
<dbReference type="PhosphoSitePlus" id="Q61045"/>
<dbReference type="PaxDb" id="10090-ENSMUSP00000020071"/>
<dbReference type="ProteomicsDB" id="257250"/>
<dbReference type="Antibodypedia" id="899">
    <property type="antibodies" value="152 antibodies from 24 providers"/>
</dbReference>
<dbReference type="DNASU" id="20464"/>
<dbReference type="Ensembl" id="ENSMUST00000020071.4">
    <property type="protein sequence ID" value="ENSMUSP00000020071.4"/>
    <property type="gene ID" value="ENSMUSG00000019913.5"/>
</dbReference>
<dbReference type="GeneID" id="20464"/>
<dbReference type="KEGG" id="mmu:20464"/>
<dbReference type="UCSC" id="uc007fal.1">
    <property type="organism name" value="mouse"/>
</dbReference>
<dbReference type="AGR" id="MGI:98306"/>
<dbReference type="CTD" id="6492"/>
<dbReference type="MGI" id="MGI:98306">
    <property type="gene designation" value="Sim1"/>
</dbReference>
<dbReference type="VEuPathDB" id="HostDB:ENSMUSG00000019913"/>
<dbReference type="eggNOG" id="KOG3559">
    <property type="taxonomic scope" value="Eukaryota"/>
</dbReference>
<dbReference type="GeneTree" id="ENSGT00940000156143"/>
<dbReference type="HOGENOM" id="CLU_010044_4_0_1"/>
<dbReference type="InParanoid" id="Q61045"/>
<dbReference type="OMA" id="HQTVGDH"/>
<dbReference type="OrthoDB" id="6021714at2759"/>
<dbReference type="PhylomeDB" id="Q61045"/>
<dbReference type="TreeFam" id="TF317772"/>
<dbReference type="BioGRID-ORCS" id="20464">
    <property type="hits" value="7 hits in 79 CRISPR screens"/>
</dbReference>
<dbReference type="ChiTaRS" id="Sim1">
    <property type="organism name" value="mouse"/>
</dbReference>
<dbReference type="PRO" id="PR:Q61045"/>
<dbReference type="Proteomes" id="UP000000589">
    <property type="component" value="Chromosome 10"/>
</dbReference>
<dbReference type="RNAct" id="Q61045">
    <property type="molecule type" value="protein"/>
</dbReference>
<dbReference type="Bgee" id="ENSMUSG00000019913">
    <property type="expression patterns" value="Expressed in diencephalon lateral wall and 115 other cell types or tissues"/>
</dbReference>
<dbReference type="ExpressionAtlas" id="Q61045">
    <property type="expression patterns" value="baseline and differential"/>
</dbReference>
<dbReference type="GO" id="GO:0005634">
    <property type="term" value="C:nucleus"/>
    <property type="evidence" value="ECO:0000314"/>
    <property type="project" value="MGI"/>
</dbReference>
<dbReference type="GO" id="GO:0003677">
    <property type="term" value="F:DNA binding"/>
    <property type="evidence" value="ECO:0007669"/>
    <property type="project" value="UniProtKB-KW"/>
</dbReference>
<dbReference type="GO" id="GO:0003700">
    <property type="term" value="F:DNA-binding transcription factor activity"/>
    <property type="evidence" value="ECO:0007669"/>
    <property type="project" value="InterPro"/>
</dbReference>
<dbReference type="GO" id="GO:0046982">
    <property type="term" value="F:protein heterodimerization activity"/>
    <property type="evidence" value="ECO:0000314"/>
    <property type="project" value="UniProtKB"/>
</dbReference>
<dbReference type="GO" id="GO:0030154">
    <property type="term" value="P:cell differentiation"/>
    <property type="evidence" value="ECO:0007669"/>
    <property type="project" value="UniProtKB-KW"/>
</dbReference>
<dbReference type="GO" id="GO:0007399">
    <property type="term" value="P:nervous system development"/>
    <property type="evidence" value="ECO:0007669"/>
    <property type="project" value="UniProtKB-KW"/>
</dbReference>
<dbReference type="GO" id="GO:0006355">
    <property type="term" value="P:regulation of DNA-templated transcription"/>
    <property type="evidence" value="ECO:0000314"/>
    <property type="project" value="MGI"/>
</dbReference>
<dbReference type="GO" id="GO:0001657">
    <property type="term" value="P:ureteric bud development"/>
    <property type="evidence" value="ECO:0000270"/>
    <property type="project" value="UniProtKB"/>
</dbReference>
<dbReference type="CDD" id="cd19738">
    <property type="entry name" value="bHLH-PAS_SIM1"/>
    <property type="match status" value="1"/>
</dbReference>
<dbReference type="CDD" id="cd00130">
    <property type="entry name" value="PAS"/>
    <property type="match status" value="2"/>
</dbReference>
<dbReference type="FunFam" id="3.30.450.20:FF:000017">
    <property type="entry name" value="SIM bHLH transcription factor 2"/>
    <property type="match status" value="1"/>
</dbReference>
<dbReference type="FunFam" id="3.30.450.20:FF:000047">
    <property type="entry name" value="SIM bHLH transcription factor 2"/>
    <property type="match status" value="1"/>
</dbReference>
<dbReference type="FunFam" id="4.10.280.10:FF:000007">
    <property type="entry name" value="single-minded homolog 1 isoform X1"/>
    <property type="match status" value="1"/>
</dbReference>
<dbReference type="Gene3D" id="4.10.280.10">
    <property type="entry name" value="Helix-loop-helix DNA-binding domain"/>
    <property type="match status" value="1"/>
</dbReference>
<dbReference type="Gene3D" id="3.30.450.20">
    <property type="entry name" value="PAS domain"/>
    <property type="match status" value="2"/>
</dbReference>
<dbReference type="InterPro" id="IPR011598">
    <property type="entry name" value="bHLH_dom"/>
</dbReference>
<dbReference type="InterPro" id="IPR036638">
    <property type="entry name" value="HLH_DNA-bd_sf"/>
</dbReference>
<dbReference type="InterPro" id="IPR001610">
    <property type="entry name" value="PAC"/>
</dbReference>
<dbReference type="InterPro" id="IPR000014">
    <property type="entry name" value="PAS"/>
</dbReference>
<dbReference type="InterPro" id="IPR035965">
    <property type="entry name" value="PAS-like_dom_sf"/>
</dbReference>
<dbReference type="InterPro" id="IPR013767">
    <property type="entry name" value="PAS_fold"/>
</dbReference>
<dbReference type="InterPro" id="IPR013655">
    <property type="entry name" value="PAS_fold_3"/>
</dbReference>
<dbReference type="InterPro" id="IPR010578">
    <property type="entry name" value="SIM_C"/>
</dbReference>
<dbReference type="PANTHER" id="PTHR23043">
    <property type="entry name" value="HYPOXIA-INDUCIBLE FACTOR 1 ALPHA"/>
    <property type="match status" value="1"/>
</dbReference>
<dbReference type="PANTHER" id="PTHR23043:SF22">
    <property type="entry name" value="SINGLE-MINDED HOMOLOG 1"/>
    <property type="match status" value="1"/>
</dbReference>
<dbReference type="Pfam" id="PF23171">
    <property type="entry name" value="bHLH_HIF1A"/>
    <property type="match status" value="1"/>
</dbReference>
<dbReference type="Pfam" id="PF00989">
    <property type="entry name" value="PAS"/>
    <property type="match status" value="1"/>
</dbReference>
<dbReference type="Pfam" id="PF08447">
    <property type="entry name" value="PAS_3"/>
    <property type="match status" value="1"/>
</dbReference>
<dbReference type="Pfam" id="PF06621">
    <property type="entry name" value="SIM_C"/>
    <property type="match status" value="1"/>
</dbReference>
<dbReference type="SMART" id="SM00353">
    <property type="entry name" value="HLH"/>
    <property type="match status" value="1"/>
</dbReference>
<dbReference type="SMART" id="SM00086">
    <property type="entry name" value="PAC"/>
    <property type="match status" value="1"/>
</dbReference>
<dbReference type="SMART" id="SM00091">
    <property type="entry name" value="PAS"/>
    <property type="match status" value="2"/>
</dbReference>
<dbReference type="SUPFAM" id="SSF47459">
    <property type="entry name" value="HLH, helix-loop-helix DNA-binding domain"/>
    <property type="match status" value="1"/>
</dbReference>
<dbReference type="SUPFAM" id="SSF55785">
    <property type="entry name" value="PYP-like sensor domain (PAS domain)"/>
    <property type="match status" value="2"/>
</dbReference>
<dbReference type="PROSITE" id="PS50888">
    <property type="entry name" value="BHLH"/>
    <property type="match status" value="1"/>
</dbReference>
<dbReference type="PROSITE" id="PS50112">
    <property type="entry name" value="PAS"/>
    <property type="match status" value="2"/>
</dbReference>
<dbReference type="PROSITE" id="PS51302">
    <property type="entry name" value="SIM_C"/>
    <property type="match status" value="1"/>
</dbReference>
<name>SIM1_MOUSE</name>
<reference key="1">
    <citation type="journal article" date="1996" name="Mol. Cell. Neurosci.">
        <title>Expression patterns of two murine homologs of Drosophila single-minded suggest possible roles in embryonic patterning and in the pathogenesis of Down syndrome.</title>
        <authorList>
            <person name="Fan C.-M."/>
            <person name="Kuwana E."/>
            <person name="Bulfone A."/>
            <person name="Fletcher C.F."/>
            <person name="Copeland N.G."/>
            <person name="Jenkins N.A."/>
            <person name="Crews S."/>
            <person name="Martinez S."/>
            <person name="Puelles L."/>
            <person name="Rubenstein J.L."/>
            <person name="Tessier-Lavigne M."/>
        </authorList>
    </citation>
    <scope>NUCLEOTIDE SEQUENCE [GENOMIC DNA / MRNA]</scope>
    <source>
        <strain>129/Sv</strain>
        <strain>Swiss Webster</strain>
        <tissue>Embryonic brain</tissue>
        <tissue>Embryonic stem cell</tissue>
    </source>
</reference>
<reference key="2">
    <citation type="journal article" date="1996" name="Mol. Cell. Neurosci.">
        <authorList>
            <person name="Fan C.-M."/>
            <person name="Kuwana E."/>
            <person name="Bulfone A."/>
            <person name="Fletcher C.F."/>
            <person name="Copeland N.G."/>
            <person name="Jenkins N.A."/>
            <person name="Crews S."/>
            <person name="Martinez S."/>
            <person name="Puelles L."/>
            <person name="Rubenstein J.L."/>
            <person name="Tessier-Lavigne M."/>
        </authorList>
    </citation>
    <scope>ERRATUM OF PUBMED:8812055</scope>
</reference>
<reference key="3">
    <citation type="journal article" date="1997" name="Genome Res.">
        <title>Cloning of two human homologs of the Drosophila single-minded gene SIM1 on chromosome 6q and SIM2 on 21q within the Down syndrome chromosomal region.</title>
        <authorList>
            <person name="Chrast R."/>
            <person name="Scott H.S."/>
            <person name="Chen H."/>
            <person name="Kudoh J."/>
            <person name="Rossier C."/>
            <person name="Minoshima S."/>
            <person name="Wang Y."/>
            <person name="Shimizu N."/>
            <person name="Antonarakis S.E."/>
        </authorList>
    </citation>
    <scope>SEQUENCE REVISION TO C-TERMINUS</scope>
</reference>
<reference key="4">
    <citation type="journal article" date="1996" name="Mol. Cell. Biol.">
        <title>Two new members of the murine Sim gene family are transcriptional repressors and show different expression patterns during mouse embryogenesis.</title>
        <authorList>
            <person name="Ema M."/>
            <person name="Morita M."/>
            <person name="Ikawa S."/>
            <person name="Tanaka M."/>
            <person name="Matsuda Y."/>
            <person name="Gotoh O."/>
            <person name="Saijoh Y."/>
            <person name="Fujii H."/>
            <person name="Hamada H."/>
            <person name="Kikuchi Y."/>
            <person name="Fujii-Kuriyama Y."/>
        </authorList>
    </citation>
    <scope>NUCLEOTIDE SEQUENCE [MRNA]</scope>
    <source>
        <strain>C57BL/6J</strain>
    </source>
</reference>
<reference key="5">
    <citation type="submission" date="1998-04" db="EMBL/GenBank/DDBJ databases">
        <title>Mouse single-minded1 (mSim1) gene.</title>
        <authorList>
            <person name="Hosoya T."/>
        </authorList>
    </citation>
    <scope>NUCLEOTIDE SEQUENCE [GENOMIC DNA]</scope>
    <source>
        <strain>129/Sv</strain>
    </source>
</reference>
<reference key="6">
    <citation type="journal article" date="1997" name="J. Biol. Chem.">
        <title>Two murine homologs of the Drosophila single-minded protein that interact with the mouse aryl hydrocarbon receptor nuclear translocator protein.</title>
        <authorList>
            <person name="Probst M.R."/>
            <person name="Fan C.-M."/>
            <person name="Tessier-Lavigne M."/>
            <person name="Hankinson O."/>
        </authorList>
    </citation>
    <scope>SUBUNIT</scope>
</reference>
<reference key="7">
    <citation type="journal article" date="2016" name="Elife">
        <title>NPAS1-ARNT and NPAS3-ARNT crystal structures implicate the bHLH-PAS family as multi-ligand binding transcription factors.</title>
        <authorList>
            <person name="Wu D."/>
            <person name="Su X."/>
            <person name="Potluri N."/>
            <person name="Kim Y."/>
            <person name="Rastinejad F."/>
        </authorList>
    </citation>
    <scope>INTERACTION WITH ARNT AND ARNT2</scope>
</reference>
<evidence type="ECO:0000250" key="1"/>
<evidence type="ECO:0000255" key="2">
    <source>
        <dbReference type="PROSITE-ProRule" id="PRU00140"/>
    </source>
</evidence>
<evidence type="ECO:0000255" key="3">
    <source>
        <dbReference type="PROSITE-ProRule" id="PRU00632"/>
    </source>
</evidence>
<evidence type="ECO:0000255" key="4">
    <source>
        <dbReference type="PROSITE-ProRule" id="PRU00981"/>
    </source>
</evidence>
<evidence type="ECO:0000256" key="5">
    <source>
        <dbReference type="SAM" id="MobiDB-lite"/>
    </source>
</evidence>
<evidence type="ECO:0000269" key="6">
    <source>
    </source>
</evidence>
<evidence type="ECO:0000269" key="7">
    <source>
    </source>
</evidence>
<evidence type="ECO:0000305" key="8"/>
<feature type="chain" id="PRO_0000127440" description="Single-minded homolog 1">
    <location>
        <begin position="1"/>
        <end position="765"/>
    </location>
</feature>
<feature type="domain" description="bHLH" evidence="4">
    <location>
        <begin position="1"/>
        <end position="53"/>
    </location>
</feature>
<feature type="domain" description="PAS 1" evidence="2">
    <location>
        <begin position="77"/>
        <end position="147"/>
    </location>
</feature>
<feature type="domain" description="PAS 2" evidence="2">
    <location>
        <begin position="218"/>
        <end position="288"/>
    </location>
</feature>
<feature type="domain" description="PAC">
    <location>
        <begin position="292"/>
        <end position="335"/>
    </location>
</feature>
<feature type="domain" description="Single-minded C-terminal" evidence="3">
    <location>
        <begin position="336"/>
        <end position="765"/>
    </location>
</feature>
<feature type="region of interest" description="Disordered" evidence="5">
    <location>
        <begin position="352"/>
        <end position="428"/>
    </location>
</feature>
<feature type="region of interest" description="Disordered" evidence="5">
    <location>
        <begin position="527"/>
        <end position="560"/>
    </location>
</feature>
<feature type="short sequence motif" description="Nuclear localization signal" evidence="1">
    <location>
        <begin position="368"/>
        <end position="387"/>
    </location>
</feature>
<feature type="compositionally biased region" description="Low complexity" evidence="5">
    <location>
        <begin position="352"/>
        <end position="365"/>
    </location>
</feature>
<feature type="compositionally biased region" description="Low complexity" evidence="5">
    <location>
        <begin position="373"/>
        <end position="385"/>
    </location>
</feature>
<feature type="compositionally biased region" description="Basic and acidic residues" evidence="5">
    <location>
        <begin position="394"/>
        <end position="404"/>
    </location>
</feature>
<feature type="sequence conflict" description="In Ref. 1; AAA91201/AAC05481." evidence="8" ref="1">
    <original>H</original>
    <variation>L</variation>
    <location>
        <position position="133"/>
    </location>
</feature>
<feature type="sequence conflict" description="In Ref. 1; AAA91201." evidence="8" ref="1">
    <location>
        <position position="176"/>
    </location>
</feature>
<feature type="sequence conflict" description="In Ref. 1; AAA91201/AAC05481." evidence="8" ref="1">
    <original>P</original>
    <variation>R</variation>
    <location>
        <position position="322"/>
    </location>
</feature>
<feature type="sequence conflict" description="In Ref. 1; AAA91201." evidence="8" ref="1">
    <original>A</original>
    <variation>P</variation>
    <location>
        <position position="480"/>
    </location>
</feature>
<feature type="sequence conflict" description="In Ref. 1; AAA91201." evidence="8" ref="1">
    <original>D</original>
    <variation>S</variation>
    <location>
        <position position="537"/>
    </location>
</feature>
<feature type="sequence conflict" description="In Ref. 1; AAA91201." evidence="8" ref="1">
    <original>F</original>
    <variation>K</variation>
    <location>
        <position position="698"/>
    </location>
</feature>
<accession>Q61045</accession>
<accession>O70284</accession>
<accession>P70183</accession>